<evidence type="ECO:0000255" key="1">
    <source>
        <dbReference type="HAMAP-Rule" id="MF_00191"/>
    </source>
</evidence>
<comment type="function">
    <text evidence="1">Catalyzes the conversion of 1-hydroxy-2-methyl-2-(E)-butenyl 4-diphosphate (HMBPP) into a mixture of isopentenyl diphosphate (IPP) and dimethylallyl diphosphate (DMAPP). Acts in the terminal step of the DOXP/MEP pathway for isoprenoid precursor biosynthesis.</text>
</comment>
<comment type="catalytic activity">
    <reaction evidence="1">
        <text>isopentenyl diphosphate + 2 oxidized [2Fe-2S]-[ferredoxin] + H2O = (2E)-4-hydroxy-3-methylbut-2-enyl diphosphate + 2 reduced [2Fe-2S]-[ferredoxin] + 2 H(+)</text>
        <dbReference type="Rhea" id="RHEA:24488"/>
        <dbReference type="Rhea" id="RHEA-COMP:10000"/>
        <dbReference type="Rhea" id="RHEA-COMP:10001"/>
        <dbReference type="ChEBI" id="CHEBI:15377"/>
        <dbReference type="ChEBI" id="CHEBI:15378"/>
        <dbReference type="ChEBI" id="CHEBI:33737"/>
        <dbReference type="ChEBI" id="CHEBI:33738"/>
        <dbReference type="ChEBI" id="CHEBI:128753"/>
        <dbReference type="ChEBI" id="CHEBI:128769"/>
        <dbReference type="EC" id="1.17.7.4"/>
    </reaction>
</comment>
<comment type="catalytic activity">
    <reaction evidence="1">
        <text>dimethylallyl diphosphate + 2 oxidized [2Fe-2S]-[ferredoxin] + H2O = (2E)-4-hydroxy-3-methylbut-2-enyl diphosphate + 2 reduced [2Fe-2S]-[ferredoxin] + 2 H(+)</text>
        <dbReference type="Rhea" id="RHEA:24825"/>
        <dbReference type="Rhea" id="RHEA-COMP:10000"/>
        <dbReference type="Rhea" id="RHEA-COMP:10001"/>
        <dbReference type="ChEBI" id="CHEBI:15377"/>
        <dbReference type="ChEBI" id="CHEBI:15378"/>
        <dbReference type="ChEBI" id="CHEBI:33737"/>
        <dbReference type="ChEBI" id="CHEBI:33738"/>
        <dbReference type="ChEBI" id="CHEBI:57623"/>
        <dbReference type="ChEBI" id="CHEBI:128753"/>
        <dbReference type="EC" id="1.17.7.4"/>
    </reaction>
</comment>
<comment type="cofactor">
    <cofactor evidence="1">
        <name>[4Fe-4S] cluster</name>
        <dbReference type="ChEBI" id="CHEBI:49883"/>
    </cofactor>
    <text evidence="1">Binds 1 [4Fe-4S] cluster per subunit.</text>
</comment>
<comment type="pathway">
    <text evidence="1">Isoprenoid biosynthesis; dimethylallyl diphosphate biosynthesis; dimethylallyl diphosphate from (2E)-4-hydroxy-3-methylbutenyl diphosphate: step 1/1.</text>
</comment>
<comment type="pathway">
    <text evidence="1">Isoprenoid biosynthesis; isopentenyl diphosphate biosynthesis via DXP pathway; isopentenyl diphosphate from 1-deoxy-D-xylulose 5-phosphate: step 6/6.</text>
</comment>
<comment type="similarity">
    <text evidence="1">Belongs to the IspH family.</text>
</comment>
<protein>
    <recommendedName>
        <fullName evidence="1">4-hydroxy-3-methylbut-2-enyl diphosphate reductase</fullName>
        <shortName evidence="1">HMBPP reductase</shortName>
        <ecNumber evidence="1">1.17.7.4</ecNumber>
    </recommendedName>
</protein>
<dbReference type="EC" id="1.17.7.4" evidence="1"/>
<dbReference type="EMBL" id="AP008231">
    <property type="protein sequence ID" value="BAD79621.1"/>
    <property type="molecule type" value="Genomic_DNA"/>
</dbReference>
<dbReference type="RefSeq" id="WP_011243743.1">
    <property type="nucleotide sequence ID" value="NZ_CP085785.1"/>
</dbReference>
<dbReference type="SMR" id="Q5N249"/>
<dbReference type="KEGG" id="syc:syc1431_d"/>
<dbReference type="eggNOG" id="COG0761">
    <property type="taxonomic scope" value="Bacteria"/>
</dbReference>
<dbReference type="UniPathway" id="UPA00056">
    <property type="reaction ID" value="UER00097"/>
</dbReference>
<dbReference type="UniPathway" id="UPA00059">
    <property type="reaction ID" value="UER00105"/>
</dbReference>
<dbReference type="Proteomes" id="UP000001175">
    <property type="component" value="Chromosome"/>
</dbReference>
<dbReference type="GO" id="GO:0051539">
    <property type="term" value="F:4 iron, 4 sulfur cluster binding"/>
    <property type="evidence" value="ECO:0007669"/>
    <property type="project" value="UniProtKB-UniRule"/>
</dbReference>
<dbReference type="GO" id="GO:0051745">
    <property type="term" value="F:4-hydroxy-3-methylbut-2-enyl diphosphate reductase activity"/>
    <property type="evidence" value="ECO:0007669"/>
    <property type="project" value="UniProtKB-UniRule"/>
</dbReference>
<dbReference type="GO" id="GO:0046872">
    <property type="term" value="F:metal ion binding"/>
    <property type="evidence" value="ECO:0007669"/>
    <property type="project" value="UniProtKB-KW"/>
</dbReference>
<dbReference type="GO" id="GO:0050992">
    <property type="term" value="P:dimethylallyl diphosphate biosynthetic process"/>
    <property type="evidence" value="ECO:0007669"/>
    <property type="project" value="UniProtKB-UniRule"/>
</dbReference>
<dbReference type="GO" id="GO:0019288">
    <property type="term" value="P:isopentenyl diphosphate biosynthetic process, methylerythritol 4-phosphate pathway"/>
    <property type="evidence" value="ECO:0007669"/>
    <property type="project" value="UniProtKB-UniRule"/>
</dbReference>
<dbReference type="GO" id="GO:0016114">
    <property type="term" value="P:terpenoid biosynthetic process"/>
    <property type="evidence" value="ECO:0007669"/>
    <property type="project" value="UniProtKB-UniRule"/>
</dbReference>
<dbReference type="CDD" id="cd13944">
    <property type="entry name" value="lytB_ispH"/>
    <property type="match status" value="1"/>
</dbReference>
<dbReference type="Gene3D" id="3.40.50.11270">
    <property type="match status" value="1"/>
</dbReference>
<dbReference type="Gene3D" id="3.40.1010.20">
    <property type="entry name" value="4-hydroxy-3-methylbut-2-enyl diphosphate reductase, catalytic domain"/>
    <property type="match status" value="2"/>
</dbReference>
<dbReference type="HAMAP" id="MF_00191">
    <property type="entry name" value="IspH"/>
    <property type="match status" value="1"/>
</dbReference>
<dbReference type="InterPro" id="IPR003451">
    <property type="entry name" value="LytB/IspH"/>
</dbReference>
<dbReference type="NCBIfam" id="TIGR00216">
    <property type="entry name" value="ispH_lytB"/>
    <property type="match status" value="1"/>
</dbReference>
<dbReference type="NCBIfam" id="NF009911">
    <property type="entry name" value="PRK13371.1"/>
    <property type="match status" value="1"/>
</dbReference>
<dbReference type="PANTHER" id="PTHR31619">
    <property type="entry name" value="4-HYDROXY-3-METHYLBUT-2-ENYL DIPHOSPHATE REDUCTASE, CHLOROPLASTIC"/>
    <property type="match status" value="1"/>
</dbReference>
<dbReference type="PANTHER" id="PTHR31619:SF5">
    <property type="entry name" value="4-HYDROXY-3-METHYLBUT-2-ENYL DIPHOSPHATE REDUCTASE, CHLOROPLASTIC"/>
    <property type="match status" value="1"/>
</dbReference>
<dbReference type="Pfam" id="PF02401">
    <property type="entry name" value="LYTB"/>
    <property type="match status" value="1"/>
</dbReference>
<gene>
    <name evidence="1" type="primary">ispH</name>
    <name type="synonym">lytB</name>
    <name type="ordered locus">syc1431_d</name>
</gene>
<reference key="1">
    <citation type="journal article" date="2007" name="Photosyn. Res.">
        <title>Complete nucleotide sequence of the freshwater unicellular cyanobacterium Synechococcus elongatus PCC 6301 chromosome: gene content and organization.</title>
        <authorList>
            <person name="Sugita C."/>
            <person name="Ogata K."/>
            <person name="Shikata M."/>
            <person name="Jikuya H."/>
            <person name="Takano J."/>
            <person name="Furumichi M."/>
            <person name="Kanehisa M."/>
            <person name="Omata T."/>
            <person name="Sugiura M."/>
            <person name="Sugita M."/>
        </authorList>
    </citation>
    <scope>NUCLEOTIDE SEQUENCE [LARGE SCALE GENOMIC DNA]</scope>
    <source>
        <strain>ATCC 27144 / PCC 6301 / SAUG 1402/1</strain>
    </source>
</reference>
<organism>
    <name type="scientific">Synechococcus sp. (strain ATCC 27144 / PCC 6301 / SAUG 1402/1)</name>
    <name type="common">Anacystis nidulans</name>
    <dbReference type="NCBI Taxonomy" id="269084"/>
    <lineage>
        <taxon>Bacteria</taxon>
        <taxon>Bacillati</taxon>
        <taxon>Cyanobacteriota</taxon>
        <taxon>Cyanophyceae</taxon>
        <taxon>Synechococcales</taxon>
        <taxon>Synechococcaceae</taxon>
        <taxon>Synechococcus</taxon>
    </lineage>
</organism>
<proteinExistence type="inferred from homology"/>
<feature type="chain" id="PRO_0000128878" description="4-hydroxy-3-methylbut-2-enyl diphosphate reductase">
    <location>
        <begin position="1"/>
        <end position="398"/>
    </location>
</feature>
<feature type="active site" description="Proton donor" evidence="1">
    <location>
        <position position="187"/>
    </location>
</feature>
<feature type="binding site" evidence="1">
    <location>
        <position position="66"/>
    </location>
    <ligand>
        <name>[4Fe-4S] cluster</name>
        <dbReference type="ChEBI" id="CHEBI:49883"/>
    </ligand>
</feature>
<feature type="binding site" evidence="1">
    <location>
        <position position="96"/>
    </location>
    <ligand>
        <name>(2E)-4-hydroxy-3-methylbut-2-enyl diphosphate</name>
        <dbReference type="ChEBI" id="CHEBI:128753"/>
    </ligand>
</feature>
<feature type="binding site" evidence="1">
    <location>
        <position position="96"/>
    </location>
    <ligand>
        <name>dimethylallyl diphosphate</name>
        <dbReference type="ChEBI" id="CHEBI:57623"/>
    </ligand>
</feature>
<feature type="binding site" evidence="1">
    <location>
        <position position="96"/>
    </location>
    <ligand>
        <name>isopentenyl diphosphate</name>
        <dbReference type="ChEBI" id="CHEBI:128769"/>
    </ligand>
</feature>
<feature type="binding site" evidence="1">
    <location>
        <position position="157"/>
    </location>
    <ligand>
        <name>[4Fe-4S] cluster</name>
        <dbReference type="ChEBI" id="CHEBI:49883"/>
    </ligand>
</feature>
<feature type="binding site" evidence="1">
    <location>
        <position position="185"/>
    </location>
    <ligand>
        <name>(2E)-4-hydroxy-3-methylbut-2-enyl diphosphate</name>
        <dbReference type="ChEBI" id="CHEBI:128753"/>
    </ligand>
</feature>
<feature type="binding site" evidence="1">
    <location>
        <position position="185"/>
    </location>
    <ligand>
        <name>dimethylallyl diphosphate</name>
        <dbReference type="ChEBI" id="CHEBI:57623"/>
    </ligand>
</feature>
<feature type="binding site" evidence="1">
    <location>
        <position position="185"/>
    </location>
    <ligand>
        <name>isopentenyl diphosphate</name>
        <dbReference type="ChEBI" id="CHEBI:128769"/>
    </ligand>
</feature>
<feature type="binding site" evidence="1">
    <location>
        <position position="250"/>
    </location>
    <ligand>
        <name>(2E)-4-hydroxy-3-methylbut-2-enyl diphosphate</name>
        <dbReference type="ChEBI" id="CHEBI:128753"/>
    </ligand>
</feature>
<feature type="binding site" evidence="1">
    <location>
        <position position="288"/>
    </location>
    <ligand>
        <name>[4Fe-4S] cluster</name>
        <dbReference type="ChEBI" id="CHEBI:49883"/>
    </ligand>
</feature>
<feature type="binding site" evidence="1">
    <location>
        <position position="317"/>
    </location>
    <ligand>
        <name>(2E)-4-hydroxy-3-methylbut-2-enyl diphosphate</name>
        <dbReference type="ChEBI" id="CHEBI:128753"/>
    </ligand>
</feature>
<feature type="binding site" evidence="1">
    <location>
        <position position="317"/>
    </location>
    <ligand>
        <name>dimethylallyl diphosphate</name>
        <dbReference type="ChEBI" id="CHEBI:57623"/>
    </ligand>
</feature>
<feature type="binding site" evidence="1">
    <location>
        <position position="317"/>
    </location>
    <ligand>
        <name>isopentenyl diphosphate</name>
        <dbReference type="ChEBI" id="CHEBI:128769"/>
    </ligand>
</feature>
<feature type="binding site" evidence="1">
    <location>
        <position position="318"/>
    </location>
    <ligand>
        <name>(2E)-4-hydroxy-3-methylbut-2-enyl diphosphate</name>
        <dbReference type="ChEBI" id="CHEBI:128753"/>
    </ligand>
</feature>
<feature type="binding site" evidence="1">
    <location>
        <position position="318"/>
    </location>
    <ligand>
        <name>dimethylallyl diphosphate</name>
        <dbReference type="ChEBI" id="CHEBI:57623"/>
    </ligand>
</feature>
<feature type="binding site" evidence="1">
    <location>
        <position position="318"/>
    </location>
    <ligand>
        <name>isopentenyl diphosphate</name>
        <dbReference type="ChEBI" id="CHEBI:128769"/>
    </ligand>
</feature>
<feature type="binding site" evidence="1">
    <location>
        <position position="319"/>
    </location>
    <ligand>
        <name>(2E)-4-hydroxy-3-methylbut-2-enyl diphosphate</name>
        <dbReference type="ChEBI" id="CHEBI:128753"/>
    </ligand>
</feature>
<feature type="binding site" evidence="1">
    <location>
        <position position="319"/>
    </location>
    <ligand>
        <name>dimethylallyl diphosphate</name>
        <dbReference type="ChEBI" id="CHEBI:57623"/>
    </ligand>
</feature>
<feature type="binding site" evidence="1">
    <location>
        <position position="319"/>
    </location>
    <ligand>
        <name>isopentenyl diphosphate</name>
        <dbReference type="ChEBI" id="CHEBI:128769"/>
    </ligand>
</feature>
<feature type="binding site" evidence="1">
    <location>
        <position position="379"/>
    </location>
    <ligand>
        <name>(2E)-4-hydroxy-3-methylbut-2-enyl diphosphate</name>
        <dbReference type="ChEBI" id="CHEBI:128753"/>
    </ligand>
</feature>
<feature type="binding site" evidence="1">
    <location>
        <position position="379"/>
    </location>
    <ligand>
        <name>dimethylallyl diphosphate</name>
        <dbReference type="ChEBI" id="CHEBI:57623"/>
    </ligand>
</feature>
<feature type="binding site" evidence="1">
    <location>
        <position position="379"/>
    </location>
    <ligand>
        <name>isopentenyl diphosphate</name>
        <dbReference type="ChEBI" id="CHEBI:128769"/>
    </ligand>
</feature>
<sequence length="398" mass="44941">MDTKAFKRALHQSDRYNRKGFGKTTDVSGALESAYQSDLIQSLRQNGYRLQRGEITIRLAEAFGFCWGVERAVAIAYETRQHFPQERIWITNEIIHNPSVNQHLREMSVEFIPCERGEKDFSVVDRGDVVILPAFGASVQEMQLLDEKGCHIVDTTCPWVSKVWNTVEKHKRGAHTSIIHGKYNHEETVATSSFAETYLVVLNLEQAQYVCDYILNGGDRDEFMTRFGKACSAGFDPDRDLERIGIANQTTMLKSETEAIGKLFERTLLKKYGPQALNDHFLAFNTICDATQERQDAMFQLVEEPLDLIVVIGGFNSSNTTHLQEIAIERQIPSFHIDAAERIGPGNRIEHKPLHTDLTTTEPWLPAGPLTIGITSGASTPDKVVEDVIERLFDLQRS</sequence>
<accession>Q5N249</accession>
<name>ISPH_SYNP6</name>
<keyword id="KW-0004">4Fe-4S</keyword>
<keyword id="KW-0408">Iron</keyword>
<keyword id="KW-0411">Iron-sulfur</keyword>
<keyword id="KW-0414">Isoprene biosynthesis</keyword>
<keyword id="KW-0479">Metal-binding</keyword>
<keyword id="KW-0560">Oxidoreductase</keyword>